<reference key="1">
    <citation type="submission" date="2006-05" db="EMBL/GenBank/DDBJ databases">
        <authorList>
            <consortium name="NIH - Mammalian Gene Collection (MGC) project"/>
        </authorList>
    </citation>
    <scope>NUCLEOTIDE SEQUENCE [LARGE SCALE MRNA]</scope>
    <source>
        <strain>Hereford</strain>
        <tissue>Ascending colon</tissue>
    </source>
</reference>
<feature type="chain" id="PRO_0000285815" description="Zinc finger protein 22">
    <location>
        <begin position="1"/>
        <end position="225"/>
    </location>
</feature>
<feature type="zinc finger region" description="C2H2-type 1" evidence="3">
    <location>
        <begin position="55"/>
        <end position="77"/>
    </location>
</feature>
<feature type="zinc finger region" description="C2H2-type 2" evidence="3">
    <location>
        <begin position="83"/>
        <end position="105"/>
    </location>
</feature>
<feature type="zinc finger region" description="C2H2-type 3" evidence="3">
    <location>
        <begin position="111"/>
        <end position="133"/>
    </location>
</feature>
<feature type="zinc finger region" description="C2H2-type 4" evidence="3">
    <location>
        <begin position="139"/>
        <end position="161"/>
    </location>
</feature>
<feature type="zinc finger region" description="C2H2-type 5" evidence="3">
    <location>
        <begin position="167"/>
        <end position="189"/>
    </location>
</feature>
<feature type="region of interest" description="Disordered" evidence="4">
    <location>
        <begin position="1"/>
        <end position="35"/>
    </location>
</feature>
<feature type="region of interest" description="Disordered" evidence="4">
    <location>
        <begin position="183"/>
        <end position="225"/>
    </location>
</feature>
<feature type="compositionally biased region" description="Basic residues" evidence="4">
    <location>
        <begin position="195"/>
        <end position="206"/>
    </location>
</feature>
<feature type="modified residue" description="N6-acetyllysine" evidence="2">
    <location>
        <position position="18"/>
    </location>
</feature>
<sequence>MRLGKPKGGISRSSSQGKVYENQRKTGRQRQRWGMTVRFDSSLRRLRRGLDEKPYKCVECEKSFSQSSTLFQHQKIHTGKKSHKCADCGKSFFQSSNLIQHRRVHTGEKPYRCDECGERFKQSSNLIQHQRIHTGEKPYQCDECGRCFSQSSHLIQHQRTHTGEKPYQCSECGKCFSQSSHLRQHTKVHEEEKPRKTRGRSLRAKTHSLSSWKAGKGRRSAAGLR</sequence>
<gene>
    <name type="primary">ZNF22</name>
</gene>
<accession>Q1LZC0</accession>
<comment type="function">
    <text evidence="1">Binds DNA through the consensus sequence 5'-CAATG-3'. May be involved in transcriptional regulation and may play a role in tooth formation (By similarity).</text>
</comment>
<comment type="subcellular location">
    <subcellularLocation>
        <location evidence="1">Nucleus</location>
    </subcellularLocation>
</comment>
<comment type="similarity">
    <text evidence="5">Belongs to the krueppel C2H2-type zinc-finger protein family.</text>
</comment>
<proteinExistence type="evidence at transcript level"/>
<dbReference type="EMBL" id="BC116093">
    <property type="protein sequence ID" value="AAI16094.1"/>
    <property type="molecule type" value="mRNA"/>
</dbReference>
<dbReference type="RefSeq" id="NP_001070576.1">
    <property type="nucleotide sequence ID" value="NM_001077108.1"/>
</dbReference>
<dbReference type="RefSeq" id="XP_024842547.1">
    <property type="nucleotide sequence ID" value="XM_024986779.2"/>
</dbReference>
<dbReference type="RefSeq" id="XP_059738593.1">
    <property type="nucleotide sequence ID" value="XM_059882610.1"/>
</dbReference>
<dbReference type="SMR" id="Q1LZC0"/>
<dbReference type="FunCoup" id="Q1LZC0">
    <property type="interactions" value="436"/>
</dbReference>
<dbReference type="STRING" id="9913.ENSBTAP00000059027"/>
<dbReference type="Ensembl" id="ENSBTAT00000052457.4">
    <property type="protein sequence ID" value="ENSBTAP00000059027.1"/>
    <property type="gene ID" value="ENSBTAG00000037913.4"/>
</dbReference>
<dbReference type="Ensembl" id="ENSBTAT00000096730.1">
    <property type="protein sequence ID" value="ENSBTAP00000079065.1"/>
    <property type="gene ID" value="ENSBTAG00000037913.4"/>
</dbReference>
<dbReference type="Ensembl" id="ENSBTAT00000103395.1">
    <property type="protein sequence ID" value="ENSBTAP00000089217.1"/>
    <property type="gene ID" value="ENSBTAG00000037913.4"/>
</dbReference>
<dbReference type="Ensembl" id="ENSBTAT00000108246.1">
    <property type="protein sequence ID" value="ENSBTAP00000076461.1"/>
    <property type="gene ID" value="ENSBTAG00000037913.4"/>
</dbReference>
<dbReference type="GeneID" id="768051"/>
<dbReference type="KEGG" id="bta:768051"/>
<dbReference type="CTD" id="7570"/>
<dbReference type="VEuPathDB" id="HostDB:ENSBTAG00000037913"/>
<dbReference type="GeneTree" id="ENSGT01130000278272"/>
<dbReference type="InParanoid" id="Q1LZC0"/>
<dbReference type="OMA" id="WGVTVRF"/>
<dbReference type="OrthoDB" id="6077919at2759"/>
<dbReference type="Proteomes" id="UP000009136">
    <property type="component" value="Chromosome 28"/>
</dbReference>
<dbReference type="Bgee" id="ENSBTAG00000037913">
    <property type="expression patterns" value="Expressed in oocyte and 106 other cell types or tissues"/>
</dbReference>
<dbReference type="GO" id="GO:0005654">
    <property type="term" value="C:nucleoplasm"/>
    <property type="evidence" value="ECO:0007669"/>
    <property type="project" value="Ensembl"/>
</dbReference>
<dbReference type="GO" id="GO:0003677">
    <property type="term" value="F:DNA binding"/>
    <property type="evidence" value="ECO:0007669"/>
    <property type="project" value="UniProtKB-KW"/>
</dbReference>
<dbReference type="GO" id="GO:0008270">
    <property type="term" value="F:zinc ion binding"/>
    <property type="evidence" value="ECO:0007669"/>
    <property type="project" value="UniProtKB-KW"/>
</dbReference>
<dbReference type="FunFam" id="3.30.160.60:FF:000644">
    <property type="entry name" value="Zinc finger protein 22"/>
    <property type="match status" value="1"/>
</dbReference>
<dbReference type="FunFam" id="3.30.160.60:FF:000670">
    <property type="entry name" value="zinc finger protein 22"/>
    <property type="match status" value="1"/>
</dbReference>
<dbReference type="FunFam" id="3.30.160.60:FF:000817">
    <property type="entry name" value="zinc finger protein 22"/>
    <property type="match status" value="1"/>
</dbReference>
<dbReference type="FunFam" id="3.30.160.60:FF:001158">
    <property type="entry name" value="zinc finger protein 22"/>
    <property type="match status" value="2"/>
</dbReference>
<dbReference type="Gene3D" id="3.30.160.60">
    <property type="entry name" value="Classic Zinc Finger"/>
    <property type="match status" value="5"/>
</dbReference>
<dbReference type="InterPro" id="IPR050717">
    <property type="entry name" value="C2H2-ZF_Transcription_Reg"/>
</dbReference>
<dbReference type="InterPro" id="IPR036236">
    <property type="entry name" value="Znf_C2H2_sf"/>
</dbReference>
<dbReference type="InterPro" id="IPR013087">
    <property type="entry name" value="Znf_C2H2_type"/>
</dbReference>
<dbReference type="PANTHER" id="PTHR14196">
    <property type="entry name" value="ODD-SKIPPED - RELATED"/>
    <property type="match status" value="1"/>
</dbReference>
<dbReference type="PANTHER" id="PTHR14196:SF12">
    <property type="entry name" value="ZINC FINGER PROTEIN 208-LIKE"/>
    <property type="match status" value="1"/>
</dbReference>
<dbReference type="Pfam" id="PF00096">
    <property type="entry name" value="zf-C2H2"/>
    <property type="match status" value="5"/>
</dbReference>
<dbReference type="SMART" id="SM00355">
    <property type="entry name" value="ZnF_C2H2"/>
    <property type="match status" value="5"/>
</dbReference>
<dbReference type="SUPFAM" id="SSF57667">
    <property type="entry name" value="beta-beta-alpha zinc fingers"/>
    <property type="match status" value="3"/>
</dbReference>
<dbReference type="PROSITE" id="PS00028">
    <property type="entry name" value="ZINC_FINGER_C2H2_1"/>
    <property type="match status" value="5"/>
</dbReference>
<dbReference type="PROSITE" id="PS50157">
    <property type="entry name" value="ZINC_FINGER_C2H2_2"/>
    <property type="match status" value="5"/>
</dbReference>
<keyword id="KW-0007">Acetylation</keyword>
<keyword id="KW-0238">DNA-binding</keyword>
<keyword id="KW-0479">Metal-binding</keyword>
<keyword id="KW-0539">Nucleus</keyword>
<keyword id="KW-1185">Reference proteome</keyword>
<keyword id="KW-0677">Repeat</keyword>
<keyword id="KW-0804">Transcription</keyword>
<keyword id="KW-0805">Transcription regulation</keyword>
<keyword id="KW-0862">Zinc</keyword>
<keyword id="KW-0863">Zinc-finger</keyword>
<name>ZNF22_BOVIN</name>
<organism>
    <name type="scientific">Bos taurus</name>
    <name type="common">Bovine</name>
    <dbReference type="NCBI Taxonomy" id="9913"/>
    <lineage>
        <taxon>Eukaryota</taxon>
        <taxon>Metazoa</taxon>
        <taxon>Chordata</taxon>
        <taxon>Craniata</taxon>
        <taxon>Vertebrata</taxon>
        <taxon>Euteleostomi</taxon>
        <taxon>Mammalia</taxon>
        <taxon>Eutheria</taxon>
        <taxon>Laurasiatheria</taxon>
        <taxon>Artiodactyla</taxon>
        <taxon>Ruminantia</taxon>
        <taxon>Pecora</taxon>
        <taxon>Bovidae</taxon>
        <taxon>Bovinae</taxon>
        <taxon>Bos</taxon>
    </lineage>
</organism>
<evidence type="ECO:0000250" key="1"/>
<evidence type="ECO:0000250" key="2">
    <source>
        <dbReference type="UniProtKB" id="Q9ERU3"/>
    </source>
</evidence>
<evidence type="ECO:0000255" key="3">
    <source>
        <dbReference type="PROSITE-ProRule" id="PRU00042"/>
    </source>
</evidence>
<evidence type="ECO:0000256" key="4">
    <source>
        <dbReference type="SAM" id="MobiDB-lite"/>
    </source>
</evidence>
<evidence type="ECO:0000305" key="5"/>
<protein>
    <recommendedName>
        <fullName>Zinc finger protein 22</fullName>
    </recommendedName>
</protein>